<keyword id="KW-0963">Cytoplasm</keyword>
<keyword id="KW-1185">Reference proteome</keyword>
<keyword id="KW-0690">Ribosome biogenesis</keyword>
<comment type="function">
    <text evidence="1">One of several proteins that assist in the late maturation steps of the functional core of the 30S ribosomal subunit. Associates with free 30S ribosomal subunits (but not with 30S subunits that are part of 70S ribosomes or polysomes). Required for efficient processing of 16S rRNA. May interact with the 5'-terminal helix region of 16S rRNA.</text>
</comment>
<comment type="subunit">
    <text evidence="1">Monomer. Binds 30S ribosomal subunits, but not 50S ribosomal subunits or 70S ribosomes.</text>
</comment>
<comment type="subcellular location">
    <subcellularLocation>
        <location evidence="1">Cytoplasm</location>
    </subcellularLocation>
</comment>
<comment type="similarity">
    <text evidence="1">Belongs to the RbfA family.</text>
</comment>
<evidence type="ECO:0000255" key="1">
    <source>
        <dbReference type="HAMAP-Rule" id="MF_00003"/>
    </source>
</evidence>
<feature type="chain" id="PRO_1000088858" description="Ribosome-binding factor A">
    <location>
        <begin position="1"/>
        <end position="141"/>
    </location>
</feature>
<proteinExistence type="inferred from homology"/>
<sequence length="141" mass="15815">MSRAHHQQGGAPSQRMLRVAELIRHTLSDLLSRSIVNDPVLEGHVITVPDVRMSPDLKLATAFVMPLGGKDINSVIEALDRHKKFLRSEIAQRIHLRFAPDIRFKADESFDYGDKIDALLASPQVRRDLDATHTETQKAAD</sequence>
<protein>
    <recommendedName>
        <fullName evidence="1">Ribosome-binding factor A</fullName>
    </recommendedName>
</protein>
<organism>
    <name type="scientific">Beijerinckia indica subsp. indica (strain ATCC 9039 / DSM 1715 / NCIMB 8712)</name>
    <dbReference type="NCBI Taxonomy" id="395963"/>
    <lineage>
        <taxon>Bacteria</taxon>
        <taxon>Pseudomonadati</taxon>
        <taxon>Pseudomonadota</taxon>
        <taxon>Alphaproteobacteria</taxon>
        <taxon>Hyphomicrobiales</taxon>
        <taxon>Beijerinckiaceae</taxon>
        <taxon>Beijerinckia</taxon>
    </lineage>
</organism>
<dbReference type="EMBL" id="CP001016">
    <property type="protein sequence ID" value="ACB94689.1"/>
    <property type="molecule type" value="Genomic_DNA"/>
</dbReference>
<dbReference type="RefSeq" id="WP_012384046.1">
    <property type="nucleotide sequence ID" value="NC_010581.1"/>
</dbReference>
<dbReference type="SMR" id="B2IIJ6"/>
<dbReference type="STRING" id="395963.Bind_1046"/>
<dbReference type="KEGG" id="bid:Bind_1046"/>
<dbReference type="eggNOG" id="COG0858">
    <property type="taxonomic scope" value="Bacteria"/>
</dbReference>
<dbReference type="HOGENOM" id="CLU_089475_1_0_5"/>
<dbReference type="OrthoDB" id="9805051at2"/>
<dbReference type="Proteomes" id="UP000001695">
    <property type="component" value="Chromosome"/>
</dbReference>
<dbReference type="GO" id="GO:0005829">
    <property type="term" value="C:cytosol"/>
    <property type="evidence" value="ECO:0007669"/>
    <property type="project" value="TreeGrafter"/>
</dbReference>
<dbReference type="GO" id="GO:0043024">
    <property type="term" value="F:ribosomal small subunit binding"/>
    <property type="evidence" value="ECO:0007669"/>
    <property type="project" value="TreeGrafter"/>
</dbReference>
<dbReference type="GO" id="GO:0030490">
    <property type="term" value="P:maturation of SSU-rRNA"/>
    <property type="evidence" value="ECO:0007669"/>
    <property type="project" value="UniProtKB-UniRule"/>
</dbReference>
<dbReference type="Gene3D" id="3.30.300.20">
    <property type="match status" value="1"/>
</dbReference>
<dbReference type="HAMAP" id="MF_00003">
    <property type="entry name" value="RbfA"/>
    <property type="match status" value="1"/>
</dbReference>
<dbReference type="InterPro" id="IPR015946">
    <property type="entry name" value="KH_dom-like_a/b"/>
</dbReference>
<dbReference type="InterPro" id="IPR000238">
    <property type="entry name" value="RbfA"/>
</dbReference>
<dbReference type="InterPro" id="IPR023799">
    <property type="entry name" value="RbfA_dom_sf"/>
</dbReference>
<dbReference type="InterPro" id="IPR020053">
    <property type="entry name" value="Ribosome-bd_factorA_CS"/>
</dbReference>
<dbReference type="NCBIfam" id="NF001802">
    <property type="entry name" value="PRK00521.2-5"/>
    <property type="match status" value="1"/>
</dbReference>
<dbReference type="NCBIfam" id="TIGR00082">
    <property type="entry name" value="rbfA"/>
    <property type="match status" value="1"/>
</dbReference>
<dbReference type="PANTHER" id="PTHR33515">
    <property type="entry name" value="RIBOSOME-BINDING FACTOR A, CHLOROPLASTIC-RELATED"/>
    <property type="match status" value="1"/>
</dbReference>
<dbReference type="PANTHER" id="PTHR33515:SF1">
    <property type="entry name" value="RIBOSOME-BINDING FACTOR A, CHLOROPLASTIC-RELATED"/>
    <property type="match status" value="1"/>
</dbReference>
<dbReference type="Pfam" id="PF02033">
    <property type="entry name" value="RBFA"/>
    <property type="match status" value="1"/>
</dbReference>
<dbReference type="SUPFAM" id="SSF89919">
    <property type="entry name" value="Ribosome-binding factor A, RbfA"/>
    <property type="match status" value="1"/>
</dbReference>
<dbReference type="PROSITE" id="PS01319">
    <property type="entry name" value="RBFA"/>
    <property type="match status" value="1"/>
</dbReference>
<gene>
    <name evidence="1" type="primary">rbfA</name>
    <name type="ordered locus">Bind_1046</name>
</gene>
<name>RBFA_BEII9</name>
<accession>B2IIJ6</accession>
<reference key="1">
    <citation type="journal article" date="2010" name="J. Bacteriol.">
        <title>Complete genome sequence of Beijerinckia indica subsp. indica.</title>
        <authorList>
            <person name="Tamas I."/>
            <person name="Dedysh S.N."/>
            <person name="Liesack W."/>
            <person name="Stott M.B."/>
            <person name="Alam M."/>
            <person name="Murrell J.C."/>
            <person name="Dunfield P.F."/>
        </authorList>
    </citation>
    <scope>NUCLEOTIDE SEQUENCE [LARGE SCALE GENOMIC DNA]</scope>
    <source>
        <strain>ATCC 9039 / DSM 1715 / NCIMB 8712</strain>
    </source>
</reference>